<name>SPER2_ARATH</name>
<organism evidence="11">
    <name type="scientific">Arabidopsis thaliana</name>
    <name type="common">Mouse-ear cress</name>
    <dbReference type="NCBI Taxonomy" id="3702"/>
    <lineage>
        <taxon>Eukaryota</taxon>
        <taxon>Viridiplantae</taxon>
        <taxon>Streptophyta</taxon>
        <taxon>Embryophyta</taxon>
        <taxon>Tracheophyta</taxon>
        <taxon>Spermatophyta</taxon>
        <taxon>Magnoliopsida</taxon>
        <taxon>eudicotyledons</taxon>
        <taxon>Gunneridae</taxon>
        <taxon>Pentapetalae</taxon>
        <taxon>rosids</taxon>
        <taxon>malvids</taxon>
        <taxon>Brassicales</taxon>
        <taxon>Brassicaceae</taxon>
        <taxon>Camelineae</taxon>
        <taxon>Arabidopsis</taxon>
    </lineage>
</organism>
<gene>
    <name evidence="6" type="primary">SPEAR2</name>
    <name evidence="5" type="synonym">TIE4</name>
    <name evidence="9" type="ordered locus">At2g34010</name>
    <name evidence="10" type="ORF">T14G11.13</name>
</gene>
<feature type="chain" id="PRO_0000435867" description="Protein SPEAR2">
    <location>
        <begin position="1"/>
        <end position="300"/>
    </location>
</feature>
<feature type="region of interest" description="Disordered" evidence="2">
    <location>
        <begin position="1"/>
        <end position="64"/>
    </location>
</feature>
<feature type="short sequence motif" description="SPL" evidence="7">
    <location>
        <begin position="37"/>
        <end position="45"/>
    </location>
</feature>
<feature type="short sequence motif" description="EAR" evidence="7">
    <location>
        <begin position="294"/>
        <end position="300"/>
    </location>
</feature>
<feature type="compositionally biased region" description="Polar residues" evidence="2">
    <location>
        <begin position="1"/>
        <end position="11"/>
    </location>
</feature>
<feature type="compositionally biased region" description="Basic residues" evidence="2">
    <location>
        <begin position="25"/>
        <end position="38"/>
    </location>
</feature>
<feature type="compositionally biased region" description="Basic and acidic residues" evidence="2">
    <location>
        <begin position="43"/>
        <end position="54"/>
    </location>
</feature>
<feature type="compositionally biased region" description="Low complexity" evidence="2">
    <location>
        <begin position="55"/>
        <end position="64"/>
    </location>
</feature>
<sequence length="300" mass="33576">MCSNNNTSSGSYGELQLHDESSGSCRKKQKKDKVRRRGPGVAELEKIRLQEEYKPPLSSSPSLPNIDHHHHTLFAPASSVYDLVMTSPNFSFPEKLASTLPVFPISYGSLIPPAPIFQRSQHSLMMNLPNPSPGAGRFYQFIEPPSNQRSCVDSVSQFLEEENKKIFTAKKRPWPFLTDTTKPSVGPTTTSTIIRPDATQNRSMGITPVQETGTTTSNPIAIDSPTSIPRHYPRFIPLGLQYEQQQQKLKDLDETMQWRSKKPFYSFIPSGDPSNDDQEQRPCDLFGSAADHGIDLNLKL</sequence>
<evidence type="ECO:0000250" key="1">
    <source>
        <dbReference type="UniProtKB" id="Q6IDB0"/>
    </source>
</evidence>
<evidence type="ECO:0000256" key="2">
    <source>
        <dbReference type="SAM" id="MobiDB-lite"/>
    </source>
</evidence>
<evidence type="ECO:0000269" key="3">
    <source>
    </source>
</evidence>
<evidence type="ECO:0000269" key="4">
    <source>
    </source>
</evidence>
<evidence type="ECO:0000303" key="5">
    <source>
    </source>
</evidence>
<evidence type="ECO:0000303" key="6">
    <source>
    </source>
</evidence>
<evidence type="ECO:0000305" key="7"/>
<evidence type="ECO:0000305" key="8">
    <source>
    </source>
</evidence>
<evidence type="ECO:0000312" key="9">
    <source>
        <dbReference type="Araport" id="AT2G34010"/>
    </source>
</evidence>
<evidence type="ECO:0000312" key="10">
    <source>
        <dbReference type="EMBL" id="AAB67619.1"/>
    </source>
</evidence>
<evidence type="ECO:0000312" key="11">
    <source>
        <dbReference type="Proteomes" id="UP000006548"/>
    </source>
</evidence>
<proteinExistence type="evidence at protein level"/>
<dbReference type="EMBL" id="AC002341">
    <property type="protein sequence ID" value="AAB67619.1"/>
    <property type="status" value="ALT_SEQ"/>
    <property type="molecule type" value="Genomic_DNA"/>
</dbReference>
<dbReference type="EMBL" id="CP002685">
    <property type="protein sequence ID" value="AEC08906.1"/>
    <property type="molecule type" value="Genomic_DNA"/>
</dbReference>
<dbReference type="EMBL" id="AY219137">
    <property type="protein sequence ID" value="AAO37224.1"/>
    <property type="molecule type" value="mRNA"/>
</dbReference>
<dbReference type="PIR" id="C84751">
    <property type="entry name" value="C84751"/>
</dbReference>
<dbReference type="RefSeq" id="NP_180948.2">
    <property type="nucleotide sequence ID" value="NM_128952.3"/>
</dbReference>
<dbReference type="SMR" id="F4IGU3"/>
<dbReference type="STRING" id="3702.F4IGU3"/>
<dbReference type="GlyGen" id="F4IGU3">
    <property type="glycosylation" value="1 site"/>
</dbReference>
<dbReference type="PaxDb" id="3702-AT2G34010.1"/>
<dbReference type="EnsemblPlants" id="AT2G34010.1">
    <property type="protein sequence ID" value="AT2G34010.1"/>
    <property type="gene ID" value="AT2G34010"/>
</dbReference>
<dbReference type="GeneID" id="817962"/>
<dbReference type="Gramene" id="AT2G34010.1">
    <property type="protein sequence ID" value="AT2G34010.1"/>
    <property type="gene ID" value="AT2G34010"/>
</dbReference>
<dbReference type="KEGG" id="ath:AT2G34010"/>
<dbReference type="Araport" id="AT2G34010"/>
<dbReference type="TAIR" id="AT2G34010">
    <property type="gene designation" value="TIE4"/>
</dbReference>
<dbReference type="HOGENOM" id="CLU_919369_0_0_1"/>
<dbReference type="InParanoid" id="F4IGU3"/>
<dbReference type="OMA" id="QWRSKKP"/>
<dbReference type="OrthoDB" id="1189784at2759"/>
<dbReference type="PRO" id="PR:F4IGU3"/>
<dbReference type="Proteomes" id="UP000006548">
    <property type="component" value="Chromosome 2"/>
</dbReference>
<dbReference type="ExpressionAtlas" id="F4IGU3">
    <property type="expression patterns" value="baseline and differential"/>
</dbReference>
<dbReference type="GO" id="GO:0003700">
    <property type="term" value="F:DNA-binding transcription factor activity"/>
    <property type="evidence" value="ECO:0007669"/>
    <property type="project" value="InterPro"/>
</dbReference>
<dbReference type="GO" id="GO:0048366">
    <property type="term" value="P:leaf development"/>
    <property type="evidence" value="ECO:0000315"/>
    <property type="project" value="TAIR"/>
</dbReference>
<dbReference type="GO" id="GO:0045892">
    <property type="term" value="P:negative regulation of DNA-templated transcription"/>
    <property type="evidence" value="ECO:0000250"/>
    <property type="project" value="TAIR"/>
</dbReference>
<dbReference type="InterPro" id="IPR040356">
    <property type="entry name" value="SPEAR"/>
</dbReference>
<dbReference type="PANTHER" id="PTHR33388">
    <property type="entry name" value="OS01G0212500 PROTEIN"/>
    <property type="match status" value="1"/>
</dbReference>
<dbReference type="PANTHER" id="PTHR33388:SF1">
    <property type="entry name" value="PROTEIN SPEAR2"/>
    <property type="match status" value="1"/>
</dbReference>
<keyword id="KW-1185">Reference proteome</keyword>
<keyword id="KW-0678">Repressor</keyword>
<keyword id="KW-0804">Transcription</keyword>
<keyword id="KW-0805">Transcription regulation</keyword>
<accession>F4IGU3</accession>
<accession>O22954</accession>
<accession>Q84WX4</accession>
<protein>
    <recommendedName>
        <fullName evidence="6">Protein SPEAR2</fullName>
    </recommendedName>
    <alternativeName>
        <fullName evidence="6">SPL-like, EAR-containing protein 2</fullName>
    </alternativeName>
    <alternativeName>
        <fullName evidence="5">TCP interactor containing EAR motif protein 4</fullName>
    </alternativeName>
</protein>
<reference key="1">
    <citation type="journal article" date="1999" name="Nature">
        <title>Sequence and analysis of chromosome 2 of the plant Arabidopsis thaliana.</title>
        <authorList>
            <person name="Lin X."/>
            <person name="Kaul S."/>
            <person name="Rounsley S.D."/>
            <person name="Shea T.P."/>
            <person name="Benito M.-I."/>
            <person name="Town C.D."/>
            <person name="Fujii C.Y."/>
            <person name="Mason T.M."/>
            <person name="Bowman C.L."/>
            <person name="Barnstead M.E."/>
            <person name="Feldblyum T.V."/>
            <person name="Buell C.R."/>
            <person name="Ketchum K.A."/>
            <person name="Lee J.J."/>
            <person name="Ronning C.M."/>
            <person name="Koo H.L."/>
            <person name="Moffat K.S."/>
            <person name="Cronin L.A."/>
            <person name="Shen M."/>
            <person name="Pai G."/>
            <person name="Van Aken S."/>
            <person name="Umayam L."/>
            <person name="Tallon L.J."/>
            <person name="Gill J.E."/>
            <person name="Adams M.D."/>
            <person name="Carrera A.J."/>
            <person name="Creasy T.H."/>
            <person name="Goodman H.M."/>
            <person name="Somerville C.R."/>
            <person name="Copenhaver G.P."/>
            <person name="Preuss D."/>
            <person name="Nierman W.C."/>
            <person name="White O."/>
            <person name="Eisen J.A."/>
            <person name="Salzberg S.L."/>
            <person name="Fraser C.M."/>
            <person name="Venter J.C."/>
        </authorList>
    </citation>
    <scope>NUCLEOTIDE SEQUENCE [LARGE SCALE GENOMIC DNA]</scope>
    <source>
        <strain>cv. Columbia</strain>
    </source>
</reference>
<reference key="2">
    <citation type="journal article" date="2017" name="Plant J.">
        <title>Araport11: a complete reannotation of the Arabidopsis thaliana reference genome.</title>
        <authorList>
            <person name="Cheng C.Y."/>
            <person name="Krishnakumar V."/>
            <person name="Chan A.P."/>
            <person name="Thibaud-Nissen F."/>
            <person name="Schobel S."/>
            <person name="Town C.D."/>
        </authorList>
    </citation>
    <scope>GENOME REANNOTATION</scope>
    <source>
        <strain>cv. Columbia</strain>
    </source>
</reference>
<reference key="3">
    <citation type="journal article" date="2002" name="Plant Physiol.">
        <title>Cloning and sequencing of cDNAs for hypothetical genes from chromosome 2 of Arabidopsis.</title>
        <authorList>
            <person name="Xiao Y.-L."/>
            <person name="Malik M."/>
            <person name="Whitelaw C.A."/>
            <person name="Town C.D."/>
        </authorList>
    </citation>
    <scope>NUCLEOTIDE SEQUENCE [LARGE SCALE MRNA]</scope>
    <source>
        <strain>cv. Columbia</strain>
    </source>
</reference>
<reference key="4">
    <citation type="journal article" date="2013" name="Plant Cell">
        <title>The TIE1 transcriptional repressor links TCP transcription factors with TOPLESS/TOPLESS-RELATED corepressors and modulates leaf development in Arabidopsis.</title>
        <authorList>
            <person name="Tao Q."/>
            <person name="Guo D."/>
            <person name="Wei B."/>
            <person name="Zhang F."/>
            <person name="Pang C."/>
            <person name="Jiang H."/>
            <person name="Zhang J."/>
            <person name="Wei T."/>
            <person name="Gu H."/>
            <person name="Qu L.J."/>
            <person name="Qin G."/>
        </authorList>
    </citation>
    <scope>GENE FAMILY</scope>
    <scope>NOMENCLATURE</scope>
    <scope>TISSUE SPECIFICITY</scope>
</reference>
<reference key="5">
    <citation type="journal article" date="2014" name="J. Genet. Genomics">
        <title>SPOROCYTELESS is a novel embryophyte-specific transcription repressor that interacts with TPL and TCP proteins in Arabidopsis.</title>
        <authorList>
            <person name="Chen G.H."/>
            <person name="Sun J.Y."/>
            <person name="Liu M."/>
            <person name="Liu J."/>
            <person name="Yang W.C."/>
        </authorList>
    </citation>
    <scope>GENE FAMILY</scope>
    <scope>NOMENCLATURE</scope>
    <scope>INTERACTION WITH SPL; SPEAR1; SPEAR3 AND SPEAR4</scope>
    <scope>SUBUNIT</scope>
</reference>
<comment type="function">
    <text evidence="1 8">Adapter-like transcriptional repressor recruiting TPL/TPR corepressors to inhibit TCP transcription factors (By similarity). May be involved in leaf development.</text>
</comment>
<comment type="subunit">
    <text evidence="4">Homodimer and heterodimer with SPL and SPEARs (PubMed:25527103). Interacts with SPL, SPEAR1, SPEAR3 and SPEAR4 (PubMed:25527103).</text>
</comment>
<comment type="tissue specificity">
    <text evidence="3">Expressed in leaves.</text>
</comment>
<comment type="miscellaneous">
    <text evidence="3">Knock down expression of SPEAR2/TIE4 and SPEAR4/TIE3 by RNAi in a SPEAR3/TIE1 null mutant produces lines displaying epinastic leaves.</text>
</comment>
<comment type="sequence caution" evidence="7">
    <conflict type="erroneous gene model prediction">
        <sequence resource="EMBL-CDS" id="AAB67619"/>
    </conflict>
</comment>